<dbReference type="EC" id="2.3.2.13"/>
<dbReference type="EMBL" id="L34840">
    <property type="protein sequence ID" value="AAB95430.1"/>
    <property type="molecule type" value="mRNA"/>
</dbReference>
<dbReference type="EMBL" id="U31905">
    <property type="protein sequence ID" value="AAC50516.1"/>
    <property type="molecule type" value="mRNA"/>
</dbReference>
<dbReference type="EMBL" id="BC007003">
    <property type="protein sequence ID" value="AAH07003.1"/>
    <property type="molecule type" value="mRNA"/>
</dbReference>
<dbReference type="CCDS" id="CCDS2723.1"/>
<dbReference type="PIR" id="S71105">
    <property type="entry name" value="S71105"/>
</dbReference>
<dbReference type="RefSeq" id="NP_003232.2">
    <property type="nucleotide sequence ID" value="NM_003241.4"/>
</dbReference>
<dbReference type="SMR" id="P49221"/>
<dbReference type="BioGRID" id="112905">
    <property type="interactions" value="9"/>
</dbReference>
<dbReference type="FunCoup" id="P49221">
    <property type="interactions" value="66"/>
</dbReference>
<dbReference type="IntAct" id="P49221">
    <property type="interactions" value="9"/>
</dbReference>
<dbReference type="STRING" id="9606.ENSP00000296125"/>
<dbReference type="DrugBank" id="DB00130">
    <property type="generic name" value="L-Glutamine"/>
</dbReference>
<dbReference type="iPTMnet" id="P49221"/>
<dbReference type="PhosphoSitePlus" id="P49221"/>
<dbReference type="BioMuta" id="TGM4"/>
<dbReference type="DMDM" id="3915892"/>
<dbReference type="jPOST" id="P49221"/>
<dbReference type="MassIVE" id="P49221"/>
<dbReference type="PaxDb" id="9606-ENSP00000296125"/>
<dbReference type="PeptideAtlas" id="P49221"/>
<dbReference type="ProteomicsDB" id="55971"/>
<dbReference type="Antibodypedia" id="29511">
    <property type="antibodies" value="310 antibodies from 32 providers"/>
</dbReference>
<dbReference type="DNASU" id="7047"/>
<dbReference type="Ensembl" id="ENST00000296125.9">
    <property type="protein sequence ID" value="ENSP00000296125.4"/>
    <property type="gene ID" value="ENSG00000163810.13"/>
</dbReference>
<dbReference type="Ensembl" id="ENST00000628744.3">
    <property type="protein sequence ID" value="ENSP00000487307.1"/>
    <property type="gene ID" value="ENSG00000281886.3"/>
</dbReference>
<dbReference type="GeneID" id="7047"/>
<dbReference type="KEGG" id="hsa:7047"/>
<dbReference type="MANE-Select" id="ENST00000296125.9">
    <property type="protein sequence ID" value="ENSP00000296125.4"/>
    <property type="RefSeq nucleotide sequence ID" value="NM_003241.4"/>
    <property type="RefSeq protein sequence ID" value="NP_003232.2"/>
</dbReference>
<dbReference type="UCSC" id="uc003coc.5">
    <property type="organism name" value="human"/>
</dbReference>
<dbReference type="AGR" id="HGNC:11780"/>
<dbReference type="CTD" id="7047"/>
<dbReference type="DisGeNET" id="7047"/>
<dbReference type="GeneCards" id="TGM4"/>
<dbReference type="HGNC" id="HGNC:11780">
    <property type="gene designation" value="TGM4"/>
</dbReference>
<dbReference type="HPA" id="ENSG00000163810">
    <property type="expression patterns" value="Tissue enriched (prostate)"/>
</dbReference>
<dbReference type="MIM" id="600585">
    <property type="type" value="gene"/>
</dbReference>
<dbReference type="neXtProt" id="NX_P49221"/>
<dbReference type="OpenTargets" id="ENSG00000163810"/>
<dbReference type="PharmGKB" id="PA36493"/>
<dbReference type="VEuPathDB" id="HostDB:ENSG00000163810"/>
<dbReference type="eggNOG" id="ENOG502QQ46">
    <property type="taxonomic scope" value="Eukaryota"/>
</dbReference>
<dbReference type="GeneTree" id="ENSGT01050000244939"/>
<dbReference type="HOGENOM" id="CLU_013435_0_2_1"/>
<dbReference type="InParanoid" id="P49221"/>
<dbReference type="OMA" id="GSWTINL"/>
<dbReference type="OrthoDB" id="437511at2759"/>
<dbReference type="PAN-GO" id="P49221">
    <property type="GO annotations" value="3 GO annotations based on evolutionary models"/>
</dbReference>
<dbReference type="PhylomeDB" id="P49221"/>
<dbReference type="TreeFam" id="TF324278"/>
<dbReference type="BRENDA" id="2.3.2.13">
    <property type="organism ID" value="2681"/>
</dbReference>
<dbReference type="PathwayCommons" id="P49221"/>
<dbReference type="SignaLink" id="P49221"/>
<dbReference type="BioGRID-ORCS" id="7047">
    <property type="hits" value="10 hits in 1140 CRISPR screens"/>
</dbReference>
<dbReference type="ChiTaRS" id="TGM4">
    <property type="organism name" value="human"/>
</dbReference>
<dbReference type="GeneWiki" id="TGM4"/>
<dbReference type="GenomeRNAi" id="7047"/>
<dbReference type="Pharos" id="P49221">
    <property type="development level" value="Tbio"/>
</dbReference>
<dbReference type="PRO" id="PR:P49221"/>
<dbReference type="Proteomes" id="UP000005640">
    <property type="component" value="Chromosome 3"/>
</dbReference>
<dbReference type="RNAct" id="P49221">
    <property type="molecule type" value="protein"/>
</dbReference>
<dbReference type="Bgee" id="ENSG00000163810">
    <property type="expression patterns" value="Expressed in male germ line stem cell (sensu Vertebrata) in testis and 74 other cell types or tissues"/>
</dbReference>
<dbReference type="ExpressionAtlas" id="P49221">
    <property type="expression patterns" value="baseline and differential"/>
</dbReference>
<dbReference type="GO" id="GO:0062023">
    <property type="term" value="C:collagen-containing extracellular matrix"/>
    <property type="evidence" value="ECO:0000314"/>
    <property type="project" value="UniProtKB"/>
</dbReference>
<dbReference type="GO" id="GO:0005737">
    <property type="term" value="C:cytoplasm"/>
    <property type="evidence" value="ECO:0000314"/>
    <property type="project" value="UniProtKB"/>
</dbReference>
<dbReference type="GO" id="GO:0070062">
    <property type="term" value="C:extracellular exosome"/>
    <property type="evidence" value="ECO:0007005"/>
    <property type="project" value="UniProtKB"/>
</dbReference>
<dbReference type="GO" id="GO:0005794">
    <property type="term" value="C:Golgi apparatus"/>
    <property type="evidence" value="ECO:0000314"/>
    <property type="project" value="UniProtKB"/>
</dbReference>
<dbReference type="GO" id="GO:0046872">
    <property type="term" value="F:metal ion binding"/>
    <property type="evidence" value="ECO:0007669"/>
    <property type="project" value="UniProtKB-KW"/>
</dbReference>
<dbReference type="GO" id="GO:0003810">
    <property type="term" value="F:protein-glutamine gamma-glutamyltransferase activity"/>
    <property type="evidence" value="ECO:0000318"/>
    <property type="project" value="GO_Central"/>
</dbReference>
<dbReference type="FunFam" id="2.60.40.10:FF:001640">
    <property type="entry name" value="Prostate-specific transglutaminase 4"/>
    <property type="match status" value="1"/>
</dbReference>
<dbReference type="FunFam" id="3.90.260.10:FF:000001">
    <property type="entry name" value="Protein-glutamine gamma-glutamyltransferase 2"/>
    <property type="match status" value="1"/>
</dbReference>
<dbReference type="FunFam" id="2.60.40.10:FF:001406">
    <property type="entry name" value="Protein-glutamine gamma-glutamyltransferase 4"/>
    <property type="match status" value="1"/>
</dbReference>
<dbReference type="FunFam" id="2.60.40.10:FF:001482">
    <property type="entry name" value="Protein-glutamine gamma-glutamyltransferase 4"/>
    <property type="match status" value="1"/>
</dbReference>
<dbReference type="Gene3D" id="2.60.40.10">
    <property type="entry name" value="Immunoglobulins"/>
    <property type="match status" value="3"/>
</dbReference>
<dbReference type="Gene3D" id="3.90.260.10">
    <property type="entry name" value="Transglutaminase-like"/>
    <property type="match status" value="1"/>
</dbReference>
<dbReference type="InterPro" id="IPR013783">
    <property type="entry name" value="Ig-like_fold"/>
</dbReference>
<dbReference type="InterPro" id="IPR014756">
    <property type="entry name" value="Ig_E-set"/>
</dbReference>
<dbReference type="InterPro" id="IPR038765">
    <property type="entry name" value="Papain-like_cys_pep_sf"/>
</dbReference>
<dbReference type="InterPro" id="IPR050779">
    <property type="entry name" value="Transglutaminase"/>
</dbReference>
<dbReference type="InterPro" id="IPR002931">
    <property type="entry name" value="Transglutaminase-like"/>
</dbReference>
<dbReference type="InterPro" id="IPR036985">
    <property type="entry name" value="Transglutaminase-like_sf"/>
</dbReference>
<dbReference type="InterPro" id="IPR023608">
    <property type="entry name" value="Transglutaminase_animal"/>
</dbReference>
<dbReference type="InterPro" id="IPR013808">
    <property type="entry name" value="Transglutaminase_AS"/>
</dbReference>
<dbReference type="InterPro" id="IPR008958">
    <property type="entry name" value="Transglutaminase_C"/>
</dbReference>
<dbReference type="InterPro" id="IPR036238">
    <property type="entry name" value="Transglutaminase_C_sf"/>
</dbReference>
<dbReference type="InterPro" id="IPR001102">
    <property type="entry name" value="Transglutaminase_N"/>
</dbReference>
<dbReference type="PANTHER" id="PTHR11590">
    <property type="entry name" value="PROTEIN-GLUTAMINE GAMMA-GLUTAMYLTRANSFERASE"/>
    <property type="match status" value="1"/>
</dbReference>
<dbReference type="PANTHER" id="PTHR11590:SF70">
    <property type="entry name" value="PROTEIN-GLUTAMINE GAMMA-GLUTAMYLTRANSFERASE 4"/>
    <property type="match status" value="1"/>
</dbReference>
<dbReference type="Pfam" id="PF00927">
    <property type="entry name" value="Transglut_C"/>
    <property type="match status" value="1"/>
</dbReference>
<dbReference type="Pfam" id="PF01841">
    <property type="entry name" value="Transglut_core"/>
    <property type="match status" value="1"/>
</dbReference>
<dbReference type="Pfam" id="PF00868">
    <property type="entry name" value="Transglut_N"/>
    <property type="match status" value="1"/>
</dbReference>
<dbReference type="PIRSF" id="PIRSF000459">
    <property type="entry name" value="TGM_EBP42"/>
    <property type="match status" value="1"/>
</dbReference>
<dbReference type="SMART" id="SM00460">
    <property type="entry name" value="TGc"/>
    <property type="match status" value="1"/>
</dbReference>
<dbReference type="SUPFAM" id="SSF54001">
    <property type="entry name" value="Cysteine proteinases"/>
    <property type="match status" value="1"/>
</dbReference>
<dbReference type="SUPFAM" id="SSF81296">
    <property type="entry name" value="E set domains"/>
    <property type="match status" value="1"/>
</dbReference>
<dbReference type="SUPFAM" id="SSF49309">
    <property type="entry name" value="Transglutaminase, two C-terminal domains"/>
    <property type="match status" value="2"/>
</dbReference>
<dbReference type="PROSITE" id="PS00547">
    <property type="entry name" value="TRANSGLUTAMINASES"/>
    <property type="match status" value="1"/>
</dbReference>
<feature type="chain" id="PRO_0000213711" description="Protein-glutamine gamma-glutamyltransferase 4">
    <location>
        <begin position="1"/>
        <end position="684"/>
    </location>
</feature>
<feature type="active site" evidence="2">
    <location>
        <position position="268"/>
    </location>
</feature>
<feature type="active site" evidence="2">
    <location>
        <position position="327"/>
    </location>
</feature>
<feature type="active site" evidence="2">
    <location>
        <position position="350"/>
    </location>
</feature>
<feature type="binding site" evidence="1">
    <location>
        <position position="390"/>
    </location>
    <ligand>
        <name>Ca(2+)</name>
        <dbReference type="ChEBI" id="CHEBI:29108"/>
    </ligand>
</feature>
<feature type="binding site" evidence="1">
    <location>
        <position position="392"/>
    </location>
    <ligand>
        <name>Ca(2+)</name>
        <dbReference type="ChEBI" id="CHEBI:29108"/>
    </ligand>
</feature>
<feature type="binding site" evidence="1">
    <location>
        <position position="442"/>
    </location>
    <ligand>
        <name>Ca(2+)</name>
        <dbReference type="ChEBI" id="CHEBI:29108"/>
    </ligand>
</feature>
<feature type="binding site" evidence="1">
    <location>
        <position position="447"/>
    </location>
    <ligand>
        <name>Ca(2+)</name>
        <dbReference type="ChEBI" id="CHEBI:29108"/>
    </ligand>
</feature>
<feature type="sequence variant" id="VAR_052555" description="In dbSNP:rs2271087.">
    <original>E</original>
    <variation>D</variation>
    <location>
        <position position="100"/>
    </location>
</feature>
<feature type="sequence variant" id="VAR_052556" description="In dbSNP:rs9818345.">
    <original>Y</original>
    <variation>H</variation>
    <location>
        <position position="244"/>
    </location>
</feature>
<feature type="sequence variant" id="VAR_052557" description="In dbSNP:rs937838.">
    <original>S</original>
    <variation>T</variation>
    <location>
        <position position="249"/>
    </location>
</feature>
<feature type="sequence variant" id="VAR_052558" description="In dbSNP:rs1995641." evidence="3">
    <original>E</original>
    <variation>K</variation>
    <location>
        <position position="313"/>
    </location>
</feature>
<feature type="sequence variant" id="VAR_052559" description="In dbSNP:rs3749195.">
    <original>R</original>
    <variation>C</variation>
    <location>
        <position position="372"/>
    </location>
</feature>
<feature type="sequence variant" id="VAR_052560" description="In dbSNP:rs13326552.">
    <original>R</original>
    <variation>H</variation>
    <location>
        <position position="372"/>
    </location>
</feature>
<feature type="sequence variant" id="VAR_052561" description="In dbSNP:rs17077022.">
    <original>I</original>
    <variation>V</variation>
    <location>
        <position position="376"/>
    </location>
</feature>
<feature type="sequence variant" id="VAR_052562" description="In dbSNP:rs9876921.">
    <original>V</original>
    <variation>I</variation>
    <location>
        <position position="409"/>
    </location>
</feature>
<feature type="sequence variant" id="VAR_052563" description="In dbSNP:rs1395388.">
    <original>E</original>
    <variation>Q</variation>
    <location>
        <position position="437"/>
    </location>
</feature>
<feature type="sequence conflict" description="In Ref. 4; AAH07003." evidence="4" ref="4">
    <original>P</original>
    <variation>S</variation>
    <location>
        <position position="353"/>
    </location>
</feature>
<evidence type="ECO:0000250" key="1"/>
<evidence type="ECO:0000255" key="2">
    <source>
        <dbReference type="PROSITE-ProRule" id="PRU10024"/>
    </source>
</evidence>
<evidence type="ECO:0000269" key="3">
    <source>
    </source>
</evidence>
<evidence type="ECO:0000305" key="4"/>
<protein>
    <recommendedName>
        <fullName>Protein-glutamine gamma-glutamyltransferase 4</fullName>
        <ecNumber>2.3.2.13</ecNumber>
    </recommendedName>
    <alternativeName>
        <fullName>Fibrinoligase</fullName>
    </alternativeName>
    <alternativeName>
        <fullName>Prostate transglutaminase</fullName>
    </alternativeName>
    <alternativeName>
        <fullName>Prostate-specific transglutaminase</fullName>
    </alternativeName>
    <alternativeName>
        <fullName>Transglutaminase P</fullName>
        <shortName>TG(P)</shortName>
        <shortName>TGP</shortName>
        <shortName>TGase P</shortName>
    </alternativeName>
    <alternativeName>
        <fullName>Transglutaminase-4</fullName>
        <shortName>TGase-4</shortName>
    </alternativeName>
</protein>
<name>TGM4_HUMAN</name>
<reference key="1">
    <citation type="journal article" date="1994" name="Biochem. Biophys. Res. Commun.">
        <title>Molecular cloning and characterization of a novel transglutaminase cDNA from a human prostate cDNA library.</title>
        <authorList>
            <person name="Grant F.J."/>
            <person name="Taylor D.A."/>
            <person name="Sheppard P.O."/>
            <person name="Mathewes S.L."/>
            <person name="Lint W."/>
            <person name="Vanaja E."/>
            <person name="Bishop P.D."/>
            <person name="O'Hara P.J."/>
        </authorList>
    </citation>
    <scope>NUCLEOTIDE SEQUENCE [MRNA]</scope>
    <source>
        <tissue>Prostate</tissue>
    </source>
</reference>
<reference key="2">
    <citation type="submission" date="1998-01" db="EMBL/GenBank/DDBJ databases">
        <authorList>
            <person name="Grant F.J."/>
        </authorList>
    </citation>
    <scope>SEQUENCE REVISION</scope>
</reference>
<reference key="3">
    <citation type="journal article" date="1996" name="Biochem. J.">
        <title>Tissue specific and androgen-regulated expression of human prostate-specific transglutaminase.</title>
        <authorList>
            <person name="Dubbink H.J."/>
            <person name="Verkaik N.S."/>
            <person name="Faber P.W."/>
            <person name="Trapman J."/>
            <person name="Schroeder F.H."/>
            <person name="Romijn J.C."/>
        </authorList>
    </citation>
    <scope>NUCLEOTIDE SEQUENCE [MRNA]</scope>
    <scope>CHARACTERIZATION</scope>
    <scope>VARIANT LYS-313</scope>
    <source>
        <tissue>Prostate</tissue>
    </source>
</reference>
<reference key="4">
    <citation type="journal article" date="2004" name="Genome Res.">
        <title>The status, quality, and expansion of the NIH full-length cDNA project: the Mammalian Gene Collection (MGC).</title>
        <authorList>
            <consortium name="The MGC Project Team"/>
        </authorList>
    </citation>
    <scope>NUCLEOTIDE SEQUENCE [LARGE SCALE MRNA]</scope>
    <source>
        <tissue>Prostate</tissue>
    </source>
</reference>
<gene>
    <name type="primary">TGM4</name>
</gene>
<sequence length="684" mass="77145">MMDASKELQVLHIDFLNQDNAVSHHTWEFQTSSPVFRRGQVFHLRLVLNQPLQSYHQLKLEFSTGPNPSIAKHTLVVLDPRTPSDHYNWQATLQNESGKEVTVAVTSSPNAILGKYQLNVKTGNHILKSEENILYLLFNPWCKEDMVFMPDEDERKEYILNDTGCHYVGAARSIKCKPWNFGQFEKNVLDCCISLLTESSLKPTDRRDPVLVCRAMCAMMSFEKGQGVLIGNWTGDYEGGTAPYKWTGSAPILQQYYNTKQAVCFGQCWVFAGILTTVLRALGIPARSVTGFDSAHDTERNLTVDTYVNENGEKITSMTHDSVWNFHVWTDAWMKRPDLPKGYDGWQAVDATPQERSQGVFCCGPSPLTAIRKGDIFIVYDTRFVFSEVNGDRLIWLVKMVNGQEELHVISMETTSIGKNISTKAVGQDRRRDITYEYKYPEGSSEERQVMDHAFLLLSSEREHRRPVKENFLHMSVQSDDVLLGNSVNFTVILKRKTAALQNVNILGSFELQLYTGKKMAKLCDLNKTSQIQGQVSEVTLTLDSKTYINSLAILDDEPVIRGFIIAEIVESKEIMASEVFTSFQYPEFSIELPNTGRIGQLLVCNCIFKNTLAIPLTDVKFSLESLGISSLQTSDHGTVQPGETIQSQIKCTPIKTGPKKFIVKLSSKQVKEINAQKIVLITK</sequence>
<keyword id="KW-0012">Acyltransferase</keyword>
<keyword id="KW-0106">Calcium</keyword>
<keyword id="KW-0479">Metal-binding</keyword>
<keyword id="KW-1267">Proteomics identification</keyword>
<keyword id="KW-1185">Reference proteome</keyword>
<keyword id="KW-0808">Transferase</keyword>
<organism>
    <name type="scientific">Homo sapiens</name>
    <name type="common">Human</name>
    <dbReference type="NCBI Taxonomy" id="9606"/>
    <lineage>
        <taxon>Eukaryota</taxon>
        <taxon>Metazoa</taxon>
        <taxon>Chordata</taxon>
        <taxon>Craniata</taxon>
        <taxon>Vertebrata</taxon>
        <taxon>Euteleostomi</taxon>
        <taxon>Mammalia</taxon>
        <taxon>Eutheria</taxon>
        <taxon>Euarchontoglires</taxon>
        <taxon>Primates</taxon>
        <taxon>Haplorrhini</taxon>
        <taxon>Catarrhini</taxon>
        <taxon>Hominidae</taxon>
        <taxon>Homo</taxon>
    </lineage>
</organism>
<accession>P49221</accession>
<accession>Q16707</accession>
<accession>Q96QN4</accession>
<comment type="function">
    <text>Associated with the mammalian reproductive process. Catalyzes the cross-linking of proteins and the conjugation of polyamines to specific proteins in the seminal tract.</text>
</comment>
<comment type="catalytic activity">
    <reaction evidence="2">
        <text>L-glutaminyl-[protein] + L-lysyl-[protein] = [protein]-L-lysyl-N(6)-5-L-glutamyl-[protein] + NH4(+)</text>
        <dbReference type="Rhea" id="RHEA:54816"/>
        <dbReference type="Rhea" id="RHEA-COMP:9752"/>
        <dbReference type="Rhea" id="RHEA-COMP:10207"/>
        <dbReference type="Rhea" id="RHEA-COMP:14005"/>
        <dbReference type="ChEBI" id="CHEBI:28938"/>
        <dbReference type="ChEBI" id="CHEBI:29969"/>
        <dbReference type="ChEBI" id="CHEBI:30011"/>
        <dbReference type="ChEBI" id="CHEBI:138370"/>
        <dbReference type="EC" id="2.3.2.13"/>
    </reaction>
</comment>
<comment type="cofactor">
    <cofactor evidence="1">
        <name>Ca(2+)</name>
        <dbReference type="ChEBI" id="CHEBI:29108"/>
    </cofactor>
    <text evidence="1">Binds 1 Ca(2+) ion per subunit.</text>
</comment>
<comment type="subunit">
    <text evidence="1">Homodimer.</text>
</comment>
<comment type="tissue specificity">
    <text>Prostate.</text>
</comment>
<comment type="similarity">
    <text evidence="4">Belongs to the transglutaminase superfamily. Transglutaminase family.</text>
</comment>
<proteinExistence type="evidence at protein level"/>